<name>CALM_APLCA</name>
<reference key="1">
    <citation type="journal article" date="1990" name="J. Mol. Biol.">
        <title>Structure and expression of the Aplysia californica calmodulin gene.</title>
        <authorList>
            <person name="Swanson M.E."/>
            <person name="Sturner S.F."/>
            <person name="Schwartz J.H."/>
        </authorList>
    </citation>
    <scope>NUCLEOTIDE SEQUENCE [GENOMIC DNA]</scope>
    <source>
        <tissue>Ganglion</tissue>
    </source>
</reference>
<reference key="2">
    <citation type="submission" date="2001-05" db="EMBL/GenBank/DDBJ databases">
        <title>Cloning of calmodulin from the individual identified neuron, metacerebral cell of Aplysia californica.</title>
        <authorList>
            <person name="Sadreyev R.I."/>
            <person name="Panchin Y.V."/>
            <person name="Meleshkevich E.A."/>
            <person name="Matz M.V."/>
            <person name="Moroz L.L."/>
        </authorList>
    </citation>
    <scope>NUCLEOTIDE SEQUENCE [MRNA]</scope>
</reference>
<organism>
    <name type="scientific">Aplysia californica</name>
    <name type="common">California sea hare</name>
    <dbReference type="NCBI Taxonomy" id="6500"/>
    <lineage>
        <taxon>Eukaryota</taxon>
        <taxon>Metazoa</taxon>
        <taxon>Spiralia</taxon>
        <taxon>Lophotrochozoa</taxon>
        <taxon>Mollusca</taxon>
        <taxon>Gastropoda</taxon>
        <taxon>Heterobranchia</taxon>
        <taxon>Euthyneura</taxon>
        <taxon>Tectipleura</taxon>
        <taxon>Aplysiida</taxon>
        <taxon>Aplysioidea</taxon>
        <taxon>Aplysiidae</taxon>
        <taxon>Aplysia</taxon>
    </lineage>
</organism>
<evidence type="ECO:0000250" key="1"/>
<evidence type="ECO:0000255" key="2">
    <source>
        <dbReference type="PROSITE-ProRule" id="PRU00448"/>
    </source>
</evidence>
<evidence type="ECO:0000305" key="3"/>
<keyword id="KW-0007">Acetylation</keyword>
<keyword id="KW-0106">Calcium</keyword>
<keyword id="KW-0479">Metal-binding</keyword>
<keyword id="KW-0488">Methylation</keyword>
<keyword id="KW-0677">Repeat</keyword>
<proteinExistence type="evidence at transcript level"/>
<gene>
    <name type="primary">CAM</name>
</gene>
<dbReference type="EMBL" id="X56888">
    <property type="protein sequence ID" value="CAA40207.1"/>
    <property type="molecule type" value="Genomic_DNA"/>
</dbReference>
<dbReference type="EMBL" id="X64653">
    <property type="status" value="NOT_ANNOTATED_CDS"/>
    <property type="molecule type" value="Genomic_DNA"/>
</dbReference>
<dbReference type="EMBL" id="X64655">
    <property type="status" value="NOT_ANNOTATED_CDS"/>
    <property type="molecule type" value="Genomic_DNA"/>
</dbReference>
<dbReference type="EMBL" id="AY036120">
    <property type="protein sequence ID" value="AAK61380.1"/>
    <property type="molecule type" value="mRNA"/>
</dbReference>
<dbReference type="PIR" id="S13248">
    <property type="entry name" value="MCGAC"/>
</dbReference>
<dbReference type="RefSeq" id="NP_001191509.1">
    <property type="nucleotide sequence ID" value="NM_001204580.1"/>
</dbReference>
<dbReference type="BMRB" id="P62145"/>
<dbReference type="SMR" id="P62145"/>
<dbReference type="EnsemblMetazoa" id="NM_001204580.1">
    <property type="protein sequence ID" value="NP_001191509.1"/>
    <property type="gene ID" value="GeneID_100533274"/>
</dbReference>
<dbReference type="GeneID" id="100533274"/>
<dbReference type="CTD" id="36329"/>
<dbReference type="OMA" id="WATHRNL"/>
<dbReference type="OrthoDB" id="26525at2759"/>
<dbReference type="Proteomes" id="UP000694888">
    <property type="component" value="Unplaced"/>
</dbReference>
<dbReference type="GO" id="GO:0016460">
    <property type="term" value="C:myosin II complex"/>
    <property type="evidence" value="ECO:0007669"/>
    <property type="project" value="TreeGrafter"/>
</dbReference>
<dbReference type="GO" id="GO:0005509">
    <property type="term" value="F:calcium ion binding"/>
    <property type="evidence" value="ECO:0007669"/>
    <property type="project" value="InterPro"/>
</dbReference>
<dbReference type="CDD" id="cd00051">
    <property type="entry name" value="EFh"/>
    <property type="match status" value="2"/>
</dbReference>
<dbReference type="FunFam" id="1.10.238.10:FF:000527">
    <property type="entry name" value="Calmodulin-3"/>
    <property type="match status" value="1"/>
</dbReference>
<dbReference type="Gene3D" id="1.10.238.10">
    <property type="entry name" value="EF-hand"/>
    <property type="match status" value="3"/>
</dbReference>
<dbReference type="InterPro" id="IPR050230">
    <property type="entry name" value="CALM/Myosin/TropC-like"/>
</dbReference>
<dbReference type="InterPro" id="IPR011992">
    <property type="entry name" value="EF-hand-dom_pair"/>
</dbReference>
<dbReference type="InterPro" id="IPR018247">
    <property type="entry name" value="EF_Hand_1_Ca_BS"/>
</dbReference>
<dbReference type="InterPro" id="IPR002048">
    <property type="entry name" value="EF_hand_dom"/>
</dbReference>
<dbReference type="PANTHER" id="PTHR23048:SF0">
    <property type="entry name" value="CALMODULIN LIKE 3"/>
    <property type="match status" value="1"/>
</dbReference>
<dbReference type="PANTHER" id="PTHR23048">
    <property type="entry name" value="MYOSIN LIGHT CHAIN 1, 3"/>
    <property type="match status" value="1"/>
</dbReference>
<dbReference type="Pfam" id="PF13499">
    <property type="entry name" value="EF-hand_7"/>
    <property type="match status" value="2"/>
</dbReference>
<dbReference type="SMART" id="SM00054">
    <property type="entry name" value="EFh"/>
    <property type="match status" value="4"/>
</dbReference>
<dbReference type="SUPFAM" id="SSF47473">
    <property type="entry name" value="EF-hand"/>
    <property type="match status" value="1"/>
</dbReference>
<dbReference type="PROSITE" id="PS00018">
    <property type="entry name" value="EF_HAND_1"/>
    <property type="match status" value="4"/>
</dbReference>
<dbReference type="PROSITE" id="PS50222">
    <property type="entry name" value="EF_HAND_2"/>
    <property type="match status" value="4"/>
</dbReference>
<accession>P62145</accession>
<accession>P07181</accession>
<accession>Q9V3T4</accession>
<protein>
    <recommendedName>
        <fullName>Calmodulin</fullName>
        <shortName>CaM</shortName>
    </recommendedName>
</protein>
<sequence length="149" mass="16811">MADQLTEEQIAEFKEAFSLFDKDGDGTITTKELGTVMRSLGQNPTEAELQDMINEVDADGNGTIDFPEFLTMMARKMKDTDSEEEIREAFRVFDKDGNGFISAAELRHVMTNLGEKLTDEEVDEMIREADIDGDGQVNYEEFVTMMTSK</sequence>
<comment type="function">
    <text>Calmodulin mediates the control of a large number of enzymes, ion channels and other proteins by Ca(2+). Among the enzymes to be stimulated by the calmodulin-Ca(2+) complex are a number of protein kinases and phosphatases.</text>
</comment>
<comment type="miscellaneous">
    <text>This protein has four functional calcium-binding sites.</text>
</comment>
<comment type="similarity">
    <text evidence="3">Belongs to the calmodulin family.</text>
</comment>
<feature type="initiator methionine" description="Removed" evidence="1">
    <location>
        <position position="1"/>
    </location>
</feature>
<feature type="chain" id="PRO_0000198243" description="Calmodulin">
    <location>
        <begin position="2"/>
        <end position="149"/>
    </location>
</feature>
<feature type="domain" description="EF-hand 1" evidence="2">
    <location>
        <begin position="8"/>
        <end position="43"/>
    </location>
</feature>
<feature type="domain" description="EF-hand 2" evidence="2">
    <location>
        <begin position="44"/>
        <end position="79"/>
    </location>
</feature>
<feature type="domain" description="EF-hand 3" evidence="2">
    <location>
        <begin position="81"/>
        <end position="116"/>
    </location>
</feature>
<feature type="domain" description="EF-hand 4" evidence="2">
    <location>
        <begin position="117"/>
        <end position="149"/>
    </location>
</feature>
<feature type="binding site" evidence="2">
    <location>
        <position position="21"/>
    </location>
    <ligand>
        <name>Ca(2+)</name>
        <dbReference type="ChEBI" id="CHEBI:29108"/>
        <label>1</label>
    </ligand>
</feature>
<feature type="binding site" evidence="2">
    <location>
        <position position="23"/>
    </location>
    <ligand>
        <name>Ca(2+)</name>
        <dbReference type="ChEBI" id="CHEBI:29108"/>
        <label>1</label>
    </ligand>
</feature>
<feature type="binding site" evidence="2">
    <location>
        <position position="25"/>
    </location>
    <ligand>
        <name>Ca(2+)</name>
        <dbReference type="ChEBI" id="CHEBI:29108"/>
        <label>1</label>
    </ligand>
</feature>
<feature type="binding site" evidence="2">
    <location>
        <position position="27"/>
    </location>
    <ligand>
        <name>Ca(2+)</name>
        <dbReference type="ChEBI" id="CHEBI:29108"/>
        <label>1</label>
    </ligand>
</feature>
<feature type="binding site" evidence="2">
    <location>
        <position position="32"/>
    </location>
    <ligand>
        <name>Ca(2+)</name>
        <dbReference type="ChEBI" id="CHEBI:29108"/>
        <label>1</label>
    </ligand>
</feature>
<feature type="binding site" evidence="2">
    <location>
        <position position="57"/>
    </location>
    <ligand>
        <name>Ca(2+)</name>
        <dbReference type="ChEBI" id="CHEBI:29108"/>
        <label>2</label>
    </ligand>
</feature>
<feature type="binding site" evidence="2">
    <location>
        <position position="59"/>
    </location>
    <ligand>
        <name>Ca(2+)</name>
        <dbReference type="ChEBI" id="CHEBI:29108"/>
        <label>2</label>
    </ligand>
</feature>
<feature type="binding site" evidence="2">
    <location>
        <position position="61"/>
    </location>
    <ligand>
        <name>Ca(2+)</name>
        <dbReference type="ChEBI" id="CHEBI:29108"/>
        <label>2</label>
    </ligand>
</feature>
<feature type="binding site" evidence="2">
    <location>
        <position position="63"/>
    </location>
    <ligand>
        <name>Ca(2+)</name>
        <dbReference type="ChEBI" id="CHEBI:29108"/>
        <label>2</label>
    </ligand>
</feature>
<feature type="binding site" evidence="2">
    <location>
        <position position="68"/>
    </location>
    <ligand>
        <name>Ca(2+)</name>
        <dbReference type="ChEBI" id="CHEBI:29108"/>
        <label>2</label>
    </ligand>
</feature>
<feature type="binding site" evidence="2">
    <location>
        <position position="94"/>
    </location>
    <ligand>
        <name>Ca(2+)</name>
        <dbReference type="ChEBI" id="CHEBI:29108"/>
        <label>3</label>
    </ligand>
</feature>
<feature type="binding site" evidence="2">
    <location>
        <position position="96"/>
    </location>
    <ligand>
        <name>Ca(2+)</name>
        <dbReference type="ChEBI" id="CHEBI:29108"/>
        <label>3</label>
    </ligand>
</feature>
<feature type="binding site" evidence="2">
    <location>
        <position position="98"/>
    </location>
    <ligand>
        <name>Ca(2+)</name>
        <dbReference type="ChEBI" id="CHEBI:29108"/>
        <label>3</label>
    </ligand>
</feature>
<feature type="binding site" evidence="2">
    <location>
        <position position="105"/>
    </location>
    <ligand>
        <name>Ca(2+)</name>
        <dbReference type="ChEBI" id="CHEBI:29108"/>
        <label>3</label>
    </ligand>
</feature>
<feature type="binding site" evidence="2">
    <location>
        <position position="130"/>
    </location>
    <ligand>
        <name>Ca(2+)</name>
        <dbReference type="ChEBI" id="CHEBI:29108"/>
        <label>4</label>
    </ligand>
</feature>
<feature type="binding site" evidence="2">
    <location>
        <position position="132"/>
    </location>
    <ligand>
        <name>Ca(2+)</name>
        <dbReference type="ChEBI" id="CHEBI:29108"/>
        <label>4</label>
    </ligand>
</feature>
<feature type="binding site" evidence="2">
    <location>
        <position position="134"/>
    </location>
    <ligand>
        <name>Ca(2+)</name>
        <dbReference type="ChEBI" id="CHEBI:29108"/>
        <label>4</label>
    </ligand>
</feature>
<feature type="binding site" evidence="2">
    <location>
        <position position="136"/>
    </location>
    <ligand>
        <name>Ca(2+)</name>
        <dbReference type="ChEBI" id="CHEBI:29108"/>
        <label>4</label>
    </ligand>
</feature>
<feature type="binding site" evidence="2">
    <location>
        <position position="141"/>
    </location>
    <ligand>
        <name>Ca(2+)</name>
        <dbReference type="ChEBI" id="CHEBI:29108"/>
        <label>4</label>
    </ligand>
</feature>
<feature type="modified residue" description="N-acetylalanine" evidence="1">
    <location>
        <position position="2"/>
    </location>
</feature>
<feature type="modified residue" description="N6,N6,N6-trimethyllysine" evidence="1">
    <location>
        <position position="116"/>
    </location>
</feature>